<organism>
    <name type="scientific">Ureaplasma parvum serovar 3 (strain ATCC 27815 / 27 / NCTC 11736)</name>
    <dbReference type="NCBI Taxonomy" id="505682"/>
    <lineage>
        <taxon>Bacteria</taxon>
        <taxon>Bacillati</taxon>
        <taxon>Mycoplasmatota</taxon>
        <taxon>Mycoplasmoidales</taxon>
        <taxon>Mycoplasmoidaceae</taxon>
        <taxon>Ureaplasma</taxon>
    </lineage>
</organism>
<comment type="function">
    <text evidence="1">Binds the lower part of the 30S subunit head. Binds mRNA in the 70S ribosome, positioning it for translation.</text>
</comment>
<comment type="subunit">
    <text evidence="1">Part of the 30S ribosomal subunit. Forms a tight complex with proteins S10 and S14.</text>
</comment>
<comment type="similarity">
    <text evidence="1">Belongs to the universal ribosomal protein uS3 family.</text>
</comment>
<gene>
    <name evidence="1" type="primary">rpsC</name>
    <name type="ordered locus">UPA3_0245</name>
</gene>
<name>RS3_UREP2</name>
<sequence>MGQKVNPNGLRFGINKQWLSRWVPTDQLQMAKWLVEDDKIRKYLSTKYKNAGIDHVEIERDQQRVNVYVYAVQSGLLIGTEASEKKLIELAINKIVGRKQLVSLKVVEVQIPELQASLMAREIADAIENRVSFRIAQKMVIKKVLKAGARGIKTHVSGRLGGVEMAREEGYTQGVMTLHTLRADIDYSMQEAHTTYGIIGVKVWINRGELFGNKLVNSVAHAANKEFSRSSKPKKGSFNRSSRSKNTKPAPKQAVSE</sequence>
<keyword id="KW-0687">Ribonucleoprotein</keyword>
<keyword id="KW-0689">Ribosomal protein</keyword>
<keyword id="KW-0694">RNA-binding</keyword>
<keyword id="KW-0699">rRNA-binding</keyword>
<reference key="1">
    <citation type="submission" date="2008-02" db="EMBL/GenBank/DDBJ databases">
        <title>Genome sequence of Ureaplasma parvum serovar 3.</title>
        <authorList>
            <person name="Methe B.A."/>
            <person name="Glass J."/>
            <person name="Waites K."/>
            <person name="Shrivastava S."/>
        </authorList>
    </citation>
    <scope>NUCLEOTIDE SEQUENCE [LARGE SCALE GENOMIC DNA]</scope>
    <source>
        <strain>ATCC 27815 / 27 / NCTC 11736</strain>
    </source>
</reference>
<proteinExistence type="inferred from homology"/>
<accession>B1AIM6</accession>
<dbReference type="EMBL" id="CP000942">
    <property type="protein sequence ID" value="ACA33257.1"/>
    <property type="molecule type" value="Genomic_DNA"/>
</dbReference>
<dbReference type="RefSeq" id="WP_004026040.1">
    <property type="nucleotide sequence ID" value="NC_010503.1"/>
</dbReference>
<dbReference type="SMR" id="B1AIM6"/>
<dbReference type="GeneID" id="93848712"/>
<dbReference type="KEGG" id="upa:UPA3_0245"/>
<dbReference type="HOGENOM" id="CLU_058591_0_2_14"/>
<dbReference type="Proteomes" id="UP000002162">
    <property type="component" value="Chromosome"/>
</dbReference>
<dbReference type="GO" id="GO:0022627">
    <property type="term" value="C:cytosolic small ribosomal subunit"/>
    <property type="evidence" value="ECO:0007669"/>
    <property type="project" value="TreeGrafter"/>
</dbReference>
<dbReference type="GO" id="GO:0003729">
    <property type="term" value="F:mRNA binding"/>
    <property type="evidence" value="ECO:0007669"/>
    <property type="project" value="UniProtKB-UniRule"/>
</dbReference>
<dbReference type="GO" id="GO:0019843">
    <property type="term" value="F:rRNA binding"/>
    <property type="evidence" value="ECO:0007669"/>
    <property type="project" value="UniProtKB-UniRule"/>
</dbReference>
<dbReference type="GO" id="GO:0003735">
    <property type="term" value="F:structural constituent of ribosome"/>
    <property type="evidence" value="ECO:0007669"/>
    <property type="project" value="InterPro"/>
</dbReference>
<dbReference type="GO" id="GO:0006412">
    <property type="term" value="P:translation"/>
    <property type="evidence" value="ECO:0007669"/>
    <property type="project" value="UniProtKB-UniRule"/>
</dbReference>
<dbReference type="CDD" id="cd02412">
    <property type="entry name" value="KH-II_30S_S3"/>
    <property type="match status" value="1"/>
</dbReference>
<dbReference type="FunFam" id="3.30.300.20:FF:000001">
    <property type="entry name" value="30S ribosomal protein S3"/>
    <property type="match status" value="1"/>
</dbReference>
<dbReference type="Gene3D" id="3.30.300.20">
    <property type="match status" value="1"/>
</dbReference>
<dbReference type="Gene3D" id="3.30.1140.32">
    <property type="entry name" value="Ribosomal protein S3, C-terminal domain"/>
    <property type="match status" value="1"/>
</dbReference>
<dbReference type="HAMAP" id="MF_01309_B">
    <property type="entry name" value="Ribosomal_uS3_B"/>
    <property type="match status" value="1"/>
</dbReference>
<dbReference type="InterPro" id="IPR004087">
    <property type="entry name" value="KH_dom"/>
</dbReference>
<dbReference type="InterPro" id="IPR015946">
    <property type="entry name" value="KH_dom-like_a/b"/>
</dbReference>
<dbReference type="InterPro" id="IPR004044">
    <property type="entry name" value="KH_dom_type_2"/>
</dbReference>
<dbReference type="InterPro" id="IPR009019">
    <property type="entry name" value="KH_sf_prok-type"/>
</dbReference>
<dbReference type="InterPro" id="IPR036419">
    <property type="entry name" value="Ribosomal_S3_C_sf"/>
</dbReference>
<dbReference type="InterPro" id="IPR005704">
    <property type="entry name" value="Ribosomal_uS3_bac-typ"/>
</dbReference>
<dbReference type="InterPro" id="IPR001351">
    <property type="entry name" value="Ribosomal_uS3_C"/>
</dbReference>
<dbReference type="InterPro" id="IPR018280">
    <property type="entry name" value="Ribosomal_uS3_CS"/>
</dbReference>
<dbReference type="NCBIfam" id="TIGR01009">
    <property type="entry name" value="rpsC_bact"/>
    <property type="match status" value="1"/>
</dbReference>
<dbReference type="PANTHER" id="PTHR11760">
    <property type="entry name" value="30S/40S RIBOSOMAL PROTEIN S3"/>
    <property type="match status" value="1"/>
</dbReference>
<dbReference type="PANTHER" id="PTHR11760:SF19">
    <property type="entry name" value="SMALL RIBOSOMAL SUBUNIT PROTEIN US3C"/>
    <property type="match status" value="1"/>
</dbReference>
<dbReference type="Pfam" id="PF07650">
    <property type="entry name" value="KH_2"/>
    <property type="match status" value="1"/>
</dbReference>
<dbReference type="Pfam" id="PF00189">
    <property type="entry name" value="Ribosomal_S3_C"/>
    <property type="match status" value="1"/>
</dbReference>
<dbReference type="SMART" id="SM00322">
    <property type="entry name" value="KH"/>
    <property type="match status" value="1"/>
</dbReference>
<dbReference type="SUPFAM" id="SSF54814">
    <property type="entry name" value="Prokaryotic type KH domain (KH-domain type II)"/>
    <property type="match status" value="1"/>
</dbReference>
<dbReference type="SUPFAM" id="SSF54821">
    <property type="entry name" value="Ribosomal protein S3 C-terminal domain"/>
    <property type="match status" value="1"/>
</dbReference>
<dbReference type="PROSITE" id="PS50823">
    <property type="entry name" value="KH_TYPE_2"/>
    <property type="match status" value="1"/>
</dbReference>
<dbReference type="PROSITE" id="PS00548">
    <property type="entry name" value="RIBOSOMAL_S3"/>
    <property type="match status" value="1"/>
</dbReference>
<protein>
    <recommendedName>
        <fullName evidence="1">Small ribosomal subunit protein uS3</fullName>
    </recommendedName>
    <alternativeName>
        <fullName evidence="3">30S ribosomal protein S3</fullName>
    </alternativeName>
</protein>
<evidence type="ECO:0000255" key="1">
    <source>
        <dbReference type="HAMAP-Rule" id="MF_01309"/>
    </source>
</evidence>
<evidence type="ECO:0000256" key="2">
    <source>
        <dbReference type="SAM" id="MobiDB-lite"/>
    </source>
</evidence>
<evidence type="ECO:0000305" key="3"/>
<feature type="chain" id="PRO_1000086170" description="Small ribosomal subunit protein uS3">
    <location>
        <begin position="1"/>
        <end position="257"/>
    </location>
</feature>
<feature type="domain" description="KH type-2" evidence="1">
    <location>
        <begin position="40"/>
        <end position="110"/>
    </location>
</feature>
<feature type="region of interest" description="Disordered" evidence="2">
    <location>
        <begin position="223"/>
        <end position="257"/>
    </location>
</feature>
<feature type="compositionally biased region" description="Basic residues" evidence="2">
    <location>
        <begin position="231"/>
        <end position="246"/>
    </location>
</feature>